<sequence>MAEITASLVKELRERTGAGMMDCKKALTEANGDIELAIENMRKSGAIKAAKKAGNVAADGVIKTKIDGNYGIILEVNCQTDFVAKDAGFQAFADKVLDAAVAGKITDVEVLKAQFEEERVALVAKIGENINIRRVAALEGDVLGSYQHGARIGVLVAAKGADEELVKHIAMHVAASKPEFIKPEDVSAEVVEKEYQVQLDIAMQSGKPKEIAEKMVEGRMKKFTGEVSLTGQPFVMEPSKTVGQLLKEHNAEVTGFIRFEVGEGIEKVETDFAAEVAAMSKQS</sequence>
<reference key="1">
    <citation type="journal article" date="2008" name="J. Bacteriol.">
        <title>Insights into the environmental resistance gene pool from the genome sequence of the multidrug-resistant environmental isolate Escherichia coli SMS-3-5.</title>
        <authorList>
            <person name="Fricke W.F."/>
            <person name="Wright M.S."/>
            <person name="Lindell A.H."/>
            <person name="Harkins D.M."/>
            <person name="Baker-Austin C."/>
            <person name="Ravel J."/>
            <person name="Stepanauskas R."/>
        </authorList>
    </citation>
    <scope>NUCLEOTIDE SEQUENCE [LARGE SCALE GENOMIC DNA]</scope>
    <source>
        <strain>SMS-3-5 / SECEC</strain>
    </source>
</reference>
<protein>
    <recommendedName>
        <fullName evidence="1">Elongation factor Ts</fullName>
        <shortName evidence="1">EF-Ts</shortName>
    </recommendedName>
</protein>
<organism>
    <name type="scientific">Escherichia coli (strain SMS-3-5 / SECEC)</name>
    <dbReference type="NCBI Taxonomy" id="439855"/>
    <lineage>
        <taxon>Bacteria</taxon>
        <taxon>Pseudomonadati</taxon>
        <taxon>Pseudomonadota</taxon>
        <taxon>Gammaproteobacteria</taxon>
        <taxon>Enterobacterales</taxon>
        <taxon>Enterobacteriaceae</taxon>
        <taxon>Escherichia</taxon>
    </lineage>
</organism>
<accession>B1LGX2</accession>
<gene>
    <name evidence="1" type="primary">tsf</name>
    <name type="ordered locus">EcSMS35_0181</name>
</gene>
<keyword id="KW-0963">Cytoplasm</keyword>
<keyword id="KW-0251">Elongation factor</keyword>
<keyword id="KW-0648">Protein biosynthesis</keyword>
<name>EFTS_ECOSM</name>
<comment type="function">
    <text evidence="1">Associates with the EF-Tu.GDP complex and induces the exchange of GDP to GTP. It remains bound to the aminoacyl-tRNA.EF-Tu.GTP complex up to the GTP hydrolysis stage on the ribosome.</text>
</comment>
<comment type="subcellular location">
    <subcellularLocation>
        <location evidence="1">Cytoplasm</location>
    </subcellularLocation>
</comment>
<comment type="similarity">
    <text evidence="1">Belongs to the EF-Ts family.</text>
</comment>
<proteinExistence type="inferred from homology"/>
<dbReference type="EMBL" id="CP000970">
    <property type="protein sequence ID" value="ACB17080.1"/>
    <property type="molecule type" value="Genomic_DNA"/>
</dbReference>
<dbReference type="RefSeq" id="WP_000818114.1">
    <property type="nucleotide sequence ID" value="NC_010498.1"/>
</dbReference>
<dbReference type="SMR" id="B1LGX2"/>
<dbReference type="GeneID" id="93777255"/>
<dbReference type="KEGG" id="ecm:EcSMS35_0181"/>
<dbReference type="HOGENOM" id="CLU_047155_0_2_6"/>
<dbReference type="Proteomes" id="UP000007011">
    <property type="component" value="Chromosome"/>
</dbReference>
<dbReference type="GO" id="GO:0005737">
    <property type="term" value="C:cytoplasm"/>
    <property type="evidence" value="ECO:0007669"/>
    <property type="project" value="UniProtKB-SubCell"/>
</dbReference>
<dbReference type="GO" id="GO:0003746">
    <property type="term" value="F:translation elongation factor activity"/>
    <property type="evidence" value="ECO:0007669"/>
    <property type="project" value="UniProtKB-UniRule"/>
</dbReference>
<dbReference type="CDD" id="cd14275">
    <property type="entry name" value="UBA_EF-Ts"/>
    <property type="match status" value="1"/>
</dbReference>
<dbReference type="FunFam" id="1.10.286.20:FF:000001">
    <property type="entry name" value="Elongation factor Ts"/>
    <property type="match status" value="1"/>
</dbReference>
<dbReference type="FunFam" id="1.10.8.10:FF:000001">
    <property type="entry name" value="Elongation factor Ts"/>
    <property type="match status" value="1"/>
</dbReference>
<dbReference type="FunFam" id="3.30.479.20:FF:000001">
    <property type="entry name" value="Elongation factor Ts"/>
    <property type="match status" value="1"/>
</dbReference>
<dbReference type="Gene3D" id="1.10.286.20">
    <property type="match status" value="1"/>
</dbReference>
<dbReference type="Gene3D" id="1.10.8.10">
    <property type="entry name" value="DNA helicase RuvA subunit, C-terminal domain"/>
    <property type="match status" value="1"/>
</dbReference>
<dbReference type="Gene3D" id="3.30.479.20">
    <property type="entry name" value="Elongation factor Ts, dimerisation domain"/>
    <property type="match status" value="2"/>
</dbReference>
<dbReference type="HAMAP" id="MF_00050">
    <property type="entry name" value="EF_Ts"/>
    <property type="match status" value="1"/>
</dbReference>
<dbReference type="InterPro" id="IPR036402">
    <property type="entry name" value="EF-Ts_dimer_sf"/>
</dbReference>
<dbReference type="InterPro" id="IPR001816">
    <property type="entry name" value="Transl_elong_EFTs/EF1B"/>
</dbReference>
<dbReference type="InterPro" id="IPR014039">
    <property type="entry name" value="Transl_elong_EFTs/EF1B_dimer"/>
</dbReference>
<dbReference type="InterPro" id="IPR018101">
    <property type="entry name" value="Transl_elong_Ts_CS"/>
</dbReference>
<dbReference type="InterPro" id="IPR009060">
    <property type="entry name" value="UBA-like_sf"/>
</dbReference>
<dbReference type="NCBIfam" id="TIGR00116">
    <property type="entry name" value="tsf"/>
    <property type="match status" value="1"/>
</dbReference>
<dbReference type="PANTHER" id="PTHR11741">
    <property type="entry name" value="ELONGATION FACTOR TS"/>
    <property type="match status" value="1"/>
</dbReference>
<dbReference type="PANTHER" id="PTHR11741:SF0">
    <property type="entry name" value="ELONGATION FACTOR TS, MITOCHONDRIAL"/>
    <property type="match status" value="1"/>
</dbReference>
<dbReference type="Pfam" id="PF00889">
    <property type="entry name" value="EF_TS"/>
    <property type="match status" value="1"/>
</dbReference>
<dbReference type="SUPFAM" id="SSF54713">
    <property type="entry name" value="Elongation factor Ts (EF-Ts), dimerisation domain"/>
    <property type="match status" value="2"/>
</dbReference>
<dbReference type="SUPFAM" id="SSF46934">
    <property type="entry name" value="UBA-like"/>
    <property type="match status" value="1"/>
</dbReference>
<dbReference type="PROSITE" id="PS01126">
    <property type="entry name" value="EF_TS_1"/>
    <property type="match status" value="1"/>
</dbReference>
<dbReference type="PROSITE" id="PS01127">
    <property type="entry name" value="EF_TS_2"/>
    <property type="match status" value="1"/>
</dbReference>
<feature type="chain" id="PRO_1000116735" description="Elongation factor Ts">
    <location>
        <begin position="1"/>
        <end position="283"/>
    </location>
</feature>
<feature type="region of interest" description="Involved in Mg(2+) ion dislocation from EF-Tu" evidence="1">
    <location>
        <begin position="80"/>
        <end position="83"/>
    </location>
</feature>
<evidence type="ECO:0000255" key="1">
    <source>
        <dbReference type="HAMAP-Rule" id="MF_00050"/>
    </source>
</evidence>